<name>MCUR1_XENTR</name>
<dbReference type="EMBL" id="BC122047">
    <property type="protein sequence ID" value="AAI22048.1"/>
    <property type="molecule type" value="mRNA"/>
</dbReference>
<dbReference type="RefSeq" id="NP_001072845.1">
    <property type="nucleotide sequence ID" value="NM_001079377.1"/>
</dbReference>
<dbReference type="SMR" id="Q0P4J6"/>
<dbReference type="FunCoup" id="Q0P4J6">
    <property type="interactions" value="709"/>
</dbReference>
<dbReference type="STRING" id="8364.ENSXETP00000020352"/>
<dbReference type="PaxDb" id="8364-ENSXETP00000004851"/>
<dbReference type="DNASU" id="780306"/>
<dbReference type="GeneID" id="780306"/>
<dbReference type="KEGG" id="xtr:780306"/>
<dbReference type="AGR" id="Xenbase:XB-GENE-995495"/>
<dbReference type="CTD" id="63933"/>
<dbReference type="Xenbase" id="XB-GENE-995495">
    <property type="gene designation" value="mcur1"/>
</dbReference>
<dbReference type="eggNOG" id="KOG3156">
    <property type="taxonomic scope" value="Eukaryota"/>
</dbReference>
<dbReference type="HOGENOM" id="CLU_063283_1_0_1"/>
<dbReference type="InParanoid" id="Q0P4J6"/>
<dbReference type="OrthoDB" id="889336at2759"/>
<dbReference type="TreeFam" id="TF331442"/>
<dbReference type="Proteomes" id="UP000008143">
    <property type="component" value="Chromosome 6"/>
</dbReference>
<dbReference type="Bgee" id="ENSXETG00000002272">
    <property type="expression patterns" value="Expressed in skeletal muscle tissue and 12 other cell types or tissues"/>
</dbReference>
<dbReference type="ExpressionAtlas" id="Q0P4J6">
    <property type="expression patterns" value="baseline"/>
</dbReference>
<dbReference type="GO" id="GO:0005743">
    <property type="term" value="C:mitochondrial inner membrane"/>
    <property type="evidence" value="ECO:0000250"/>
    <property type="project" value="UniProtKB"/>
</dbReference>
<dbReference type="GO" id="GO:0036444">
    <property type="term" value="P:calcium import into the mitochondrion"/>
    <property type="evidence" value="ECO:0000250"/>
    <property type="project" value="UniProtKB"/>
</dbReference>
<dbReference type="GO" id="GO:0070509">
    <property type="term" value="P:calcium ion import"/>
    <property type="evidence" value="ECO:0000250"/>
    <property type="project" value="UniProtKB"/>
</dbReference>
<dbReference type="GO" id="GO:0006851">
    <property type="term" value="P:mitochondrial calcium ion transmembrane transport"/>
    <property type="evidence" value="ECO:0000250"/>
    <property type="project" value="UniProtKB"/>
</dbReference>
<dbReference type="GO" id="GO:0051561">
    <property type="term" value="P:positive regulation of mitochondrial calcium ion concentration"/>
    <property type="evidence" value="ECO:0000250"/>
    <property type="project" value="UniProtKB"/>
</dbReference>
<dbReference type="FunFam" id="1.20.5.340:FF:000015">
    <property type="entry name" value="Mitochondrial calcium uniporter regulator 1"/>
    <property type="match status" value="1"/>
</dbReference>
<dbReference type="Gene3D" id="1.20.5.340">
    <property type="match status" value="1"/>
</dbReference>
<dbReference type="InterPro" id="IPR024461">
    <property type="entry name" value="CCDC90-like"/>
</dbReference>
<dbReference type="PANTHER" id="PTHR14360:SF11">
    <property type="entry name" value="MITOCHONDRIAL CALCIUM UNIPORTER REGULATOR 1"/>
    <property type="match status" value="1"/>
</dbReference>
<dbReference type="PANTHER" id="PTHR14360">
    <property type="entry name" value="PROTEIN FMP32, MITOCHONDRIAL"/>
    <property type="match status" value="1"/>
</dbReference>
<dbReference type="Pfam" id="PF07798">
    <property type="entry name" value="CCDC90-like"/>
    <property type="match status" value="1"/>
</dbReference>
<gene>
    <name evidence="1" type="primary">mcur1</name>
    <name evidence="1" type="synonym">ccdc90a</name>
</gene>
<feature type="chain" id="PRO_0000295694" description="Mitochondrial calcium uniporter regulator 1">
    <location>
        <begin position="1"/>
        <end position="262"/>
    </location>
</feature>
<feature type="transmembrane region" description="Helical" evidence="2">
    <location>
        <begin position="239"/>
        <end position="261"/>
    </location>
</feature>
<feature type="coiled-coil region" evidence="2">
    <location>
        <begin position="138"/>
        <end position="175"/>
    </location>
</feature>
<organism>
    <name type="scientific">Xenopus tropicalis</name>
    <name type="common">Western clawed frog</name>
    <name type="synonym">Silurana tropicalis</name>
    <dbReference type="NCBI Taxonomy" id="8364"/>
    <lineage>
        <taxon>Eukaryota</taxon>
        <taxon>Metazoa</taxon>
        <taxon>Chordata</taxon>
        <taxon>Craniata</taxon>
        <taxon>Vertebrata</taxon>
        <taxon>Euteleostomi</taxon>
        <taxon>Amphibia</taxon>
        <taxon>Batrachia</taxon>
        <taxon>Anura</taxon>
        <taxon>Pipoidea</taxon>
        <taxon>Pipidae</taxon>
        <taxon>Xenopodinae</taxon>
        <taxon>Xenopus</taxon>
        <taxon>Silurana</taxon>
    </lineage>
</organism>
<reference key="1">
    <citation type="submission" date="2006-08" db="EMBL/GenBank/DDBJ databases">
        <authorList>
            <consortium name="NIH - Xenopus Gene Collection (XGC) project"/>
        </authorList>
    </citation>
    <scope>NUCLEOTIDE SEQUENCE [LARGE SCALE MRNA]</scope>
    <source>
        <strain>N6</strain>
        <tissue>Skeletal muscle</tissue>
    </source>
</reference>
<accession>Q0P4J6</accession>
<keyword id="KW-0106">Calcium</keyword>
<keyword id="KW-0109">Calcium transport</keyword>
<keyword id="KW-0175">Coiled coil</keyword>
<keyword id="KW-0406">Ion transport</keyword>
<keyword id="KW-0472">Membrane</keyword>
<keyword id="KW-0496">Mitochondrion</keyword>
<keyword id="KW-0999">Mitochondrion inner membrane</keyword>
<keyword id="KW-1185">Reference proteome</keyword>
<keyword id="KW-0812">Transmembrane</keyword>
<keyword id="KW-1133">Transmembrane helix</keyword>
<keyword id="KW-0813">Transport</keyword>
<protein>
    <recommendedName>
        <fullName evidence="1">Mitochondrial calcium uniporter regulator 1</fullName>
        <shortName evidence="1">MCU regulator 1</shortName>
    </recommendedName>
    <alternativeName>
        <fullName evidence="1">Coiled-coil domain-containing protein 90A, mitochondrial</fullName>
    </alternativeName>
</protein>
<comment type="function">
    <text evidence="1">Key regulator of mitochondrial calcium uniporter (mcu) required for calcium entry into mitochondrion.</text>
</comment>
<comment type="subcellular location">
    <subcellularLocation>
        <location evidence="1">Mitochondrion inner membrane</location>
        <topology evidence="1">Single-pass membrane protein</topology>
    </subcellularLocation>
</comment>
<comment type="similarity">
    <text evidence="3">Belongs to the CCDC90 family.</text>
</comment>
<evidence type="ECO:0000250" key="1">
    <source>
        <dbReference type="UniProtKB" id="Q96AQ8"/>
    </source>
</evidence>
<evidence type="ECO:0000255" key="2"/>
<evidence type="ECO:0000305" key="3"/>
<proteinExistence type="evidence at transcript level"/>
<sequence length="262" mass="30024">MSRLQLRFLLRRALSGSGCPRYSMPGSGCPGCFLPRVTCFRDFNIITSTMQYNLDKRNIYTSVGKHYFFDTHAVVQLLEANGFSAEQSEIVVSALVKILNVNMNLIHKDMVTKEQQEISLQQVMSLIASVKKDMIILEKSEFSALRTQNEKVKIELQQLKKQLNDSIVKVRASNKLDFNLEKSRVKEMHADNERKLLELRTSIVELHSQQDRGLTQTKRKIDTEVSGVKTMQESHKLDTIKYLAGSVFTCLTIALGFYRLWI</sequence>